<dbReference type="EC" id="7.2.2.11" evidence="1"/>
<dbReference type="EMBL" id="CP000230">
    <property type="protein sequence ID" value="ABC23074.1"/>
    <property type="molecule type" value="Genomic_DNA"/>
</dbReference>
<dbReference type="RefSeq" id="WP_011389929.1">
    <property type="nucleotide sequence ID" value="NC_007643.1"/>
</dbReference>
<dbReference type="RefSeq" id="YP_427361.1">
    <property type="nucleotide sequence ID" value="NC_007643.1"/>
</dbReference>
<dbReference type="SMR" id="Q2RS21"/>
<dbReference type="STRING" id="269796.Rru_A2274"/>
<dbReference type="EnsemblBacteria" id="ABC23074">
    <property type="protein sequence ID" value="ABC23074"/>
    <property type="gene ID" value="Rru_A2274"/>
</dbReference>
<dbReference type="KEGG" id="rru:Rru_A2274"/>
<dbReference type="PATRIC" id="fig|269796.9.peg.2372"/>
<dbReference type="eggNOG" id="COG0444">
    <property type="taxonomic scope" value="Bacteria"/>
</dbReference>
<dbReference type="HOGENOM" id="CLU_000604_1_23_5"/>
<dbReference type="PhylomeDB" id="Q2RS21"/>
<dbReference type="Proteomes" id="UP000001929">
    <property type="component" value="Chromosome"/>
</dbReference>
<dbReference type="GO" id="GO:0005886">
    <property type="term" value="C:plasma membrane"/>
    <property type="evidence" value="ECO:0007669"/>
    <property type="project" value="UniProtKB-SubCell"/>
</dbReference>
<dbReference type="GO" id="GO:0015413">
    <property type="term" value="F:ABC-type nickel transporter activity"/>
    <property type="evidence" value="ECO:0007669"/>
    <property type="project" value="UniProtKB-EC"/>
</dbReference>
<dbReference type="GO" id="GO:0005524">
    <property type="term" value="F:ATP binding"/>
    <property type="evidence" value="ECO:0007669"/>
    <property type="project" value="UniProtKB-KW"/>
</dbReference>
<dbReference type="GO" id="GO:0016887">
    <property type="term" value="F:ATP hydrolysis activity"/>
    <property type="evidence" value="ECO:0007669"/>
    <property type="project" value="InterPro"/>
</dbReference>
<dbReference type="CDD" id="cd03257">
    <property type="entry name" value="ABC_NikE_OppD_transporters"/>
    <property type="match status" value="1"/>
</dbReference>
<dbReference type="Gene3D" id="3.40.50.300">
    <property type="entry name" value="P-loop containing nucleotide triphosphate hydrolases"/>
    <property type="match status" value="1"/>
</dbReference>
<dbReference type="InterPro" id="IPR003593">
    <property type="entry name" value="AAA+_ATPase"/>
</dbReference>
<dbReference type="InterPro" id="IPR050388">
    <property type="entry name" value="ABC_Ni/Peptide_Import"/>
</dbReference>
<dbReference type="InterPro" id="IPR003439">
    <property type="entry name" value="ABC_transporter-like_ATP-bd"/>
</dbReference>
<dbReference type="InterPro" id="IPR017871">
    <property type="entry name" value="ABC_transporter-like_CS"/>
</dbReference>
<dbReference type="InterPro" id="IPR027417">
    <property type="entry name" value="P-loop_NTPase"/>
</dbReference>
<dbReference type="PANTHER" id="PTHR43297:SF14">
    <property type="entry name" value="ATPASE AAA-TYPE CORE DOMAIN-CONTAINING PROTEIN"/>
    <property type="match status" value="1"/>
</dbReference>
<dbReference type="PANTHER" id="PTHR43297">
    <property type="entry name" value="OLIGOPEPTIDE TRANSPORT ATP-BINDING PROTEIN APPD"/>
    <property type="match status" value="1"/>
</dbReference>
<dbReference type="Pfam" id="PF00005">
    <property type="entry name" value="ABC_tran"/>
    <property type="match status" value="1"/>
</dbReference>
<dbReference type="SMART" id="SM00382">
    <property type="entry name" value="AAA"/>
    <property type="match status" value="1"/>
</dbReference>
<dbReference type="SUPFAM" id="SSF52540">
    <property type="entry name" value="P-loop containing nucleoside triphosphate hydrolases"/>
    <property type="match status" value="1"/>
</dbReference>
<dbReference type="PROSITE" id="PS00211">
    <property type="entry name" value="ABC_TRANSPORTER_1"/>
    <property type="match status" value="1"/>
</dbReference>
<dbReference type="PROSITE" id="PS50893">
    <property type="entry name" value="ABC_TRANSPORTER_2"/>
    <property type="match status" value="1"/>
</dbReference>
<dbReference type="PROSITE" id="PS51247">
    <property type="entry name" value="NIKD"/>
    <property type="match status" value="1"/>
</dbReference>
<sequence length="261" mass="27593">MRNDGLRIEGLTIATLGAHPLMLVEGVGLEVRRGRILALVGASGSGKSLTCAGALDVLPAGVRRLSGRVLLDGEEQALAGLKGRHVASIMQNPRSAFNPVRTMRAHGVETLKALGRHDRRSEAVLLQALEGVGLEDPGRVLGLHAFEMSGGMLQRMMIALALLTEAPFLFADEPTTDLDLVVQARVLSLLEGVVAERGLGLLIVTHDMGVVARLADDVAVMAQGRIVESGPVGEIFHRPRHDATRALVAAHLSLYGLEGVA</sequence>
<evidence type="ECO:0000255" key="1">
    <source>
        <dbReference type="HAMAP-Rule" id="MF_01711"/>
    </source>
</evidence>
<comment type="function">
    <text evidence="1">Part of the ABC transporter complex NikABCDE involved in nickel import. Responsible for energy coupling to the transport system.</text>
</comment>
<comment type="catalytic activity">
    <reaction evidence="1">
        <text>Ni(2+)(out) + ATP + H2O = Ni(2+)(in) + ADP + phosphate + H(+)</text>
        <dbReference type="Rhea" id="RHEA:15557"/>
        <dbReference type="ChEBI" id="CHEBI:15377"/>
        <dbReference type="ChEBI" id="CHEBI:15378"/>
        <dbReference type="ChEBI" id="CHEBI:30616"/>
        <dbReference type="ChEBI" id="CHEBI:43474"/>
        <dbReference type="ChEBI" id="CHEBI:49786"/>
        <dbReference type="ChEBI" id="CHEBI:456216"/>
        <dbReference type="EC" id="7.2.2.11"/>
    </reaction>
</comment>
<comment type="subunit">
    <text evidence="1">The complex is composed of two ATP-binding proteins (NikD and NikE), two transmembrane proteins (NikB and NikC) and a solute-binding protein (NikA).</text>
</comment>
<comment type="subcellular location">
    <subcellularLocation>
        <location evidence="1">Cell inner membrane</location>
        <topology evidence="1">Peripheral membrane protein</topology>
    </subcellularLocation>
</comment>
<comment type="similarity">
    <text evidence="1">Belongs to the ABC transporter superfamily. Nickel importer (TC 3.A.1.5.3) family.</text>
</comment>
<organism>
    <name type="scientific">Rhodospirillum rubrum (strain ATCC 11170 / ATH 1.1.1 / DSM 467 / LMG 4362 / NCIMB 8255 / S1)</name>
    <dbReference type="NCBI Taxonomy" id="269796"/>
    <lineage>
        <taxon>Bacteria</taxon>
        <taxon>Pseudomonadati</taxon>
        <taxon>Pseudomonadota</taxon>
        <taxon>Alphaproteobacteria</taxon>
        <taxon>Rhodospirillales</taxon>
        <taxon>Rhodospirillaceae</taxon>
        <taxon>Rhodospirillum</taxon>
    </lineage>
</organism>
<accession>Q2RS21</accession>
<name>NIKD_RHORT</name>
<reference key="1">
    <citation type="journal article" date="2011" name="Stand. Genomic Sci.">
        <title>Complete genome sequence of Rhodospirillum rubrum type strain (S1).</title>
        <authorList>
            <person name="Munk A.C."/>
            <person name="Copeland A."/>
            <person name="Lucas S."/>
            <person name="Lapidus A."/>
            <person name="Del Rio T.G."/>
            <person name="Barry K."/>
            <person name="Detter J.C."/>
            <person name="Hammon N."/>
            <person name="Israni S."/>
            <person name="Pitluck S."/>
            <person name="Brettin T."/>
            <person name="Bruce D."/>
            <person name="Han C."/>
            <person name="Tapia R."/>
            <person name="Gilna P."/>
            <person name="Schmutz J."/>
            <person name="Larimer F."/>
            <person name="Land M."/>
            <person name="Kyrpides N.C."/>
            <person name="Mavromatis K."/>
            <person name="Richardson P."/>
            <person name="Rohde M."/>
            <person name="Goeker M."/>
            <person name="Klenk H.P."/>
            <person name="Zhang Y."/>
            <person name="Roberts G.P."/>
            <person name="Reslewic S."/>
            <person name="Schwartz D.C."/>
        </authorList>
    </citation>
    <scope>NUCLEOTIDE SEQUENCE [LARGE SCALE GENOMIC DNA]</scope>
    <source>
        <strain>ATCC 11170 / ATH 1.1.1 / DSM 467 / LMG 4362 / NCIMB 8255 / S1</strain>
    </source>
</reference>
<protein>
    <recommendedName>
        <fullName evidence="1">Nickel import ATP-binding protein NikD</fullName>
        <ecNumber evidence="1">7.2.2.11</ecNumber>
    </recommendedName>
</protein>
<gene>
    <name evidence="1" type="primary">nikD</name>
    <name type="ordered locus">Rru_A2274</name>
</gene>
<proteinExistence type="inferred from homology"/>
<feature type="chain" id="PRO_0000274115" description="Nickel import ATP-binding protein NikD">
    <location>
        <begin position="1"/>
        <end position="261"/>
    </location>
</feature>
<feature type="domain" description="ABC transporter" evidence="1">
    <location>
        <begin position="6"/>
        <end position="248"/>
    </location>
</feature>
<feature type="binding site" evidence="1">
    <location>
        <begin position="41"/>
        <end position="48"/>
    </location>
    <ligand>
        <name>ATP</name>
        <dbReference type="ChEBI" id="CHEBI:30616"/>
    </ligand>
</feature>
<keyword id="KW-0067">ATP-binding</keyword>
<keyword id="KW-0997">Cell inner membrane</keyword>
<keyword id="KW-1003">Cell membrane</keyword>
<keyword id="KW-0406">Ion transport</keyword>
<keyword id="KW-0472">Membrane</keyword>
<keyword id="KW-0533">Nickel</keyword>
<keyword id="KW-0921">Nickel transport</keyword>
<keyword id="KW-0547">Nucleotide-binding</keyword>
<keyword id="KW-1185">Reference proteome</keyword>
<keyword id="KW-1278">Translocase</keyword>
<keyword id="KW-0813">Transport</keyword>